<evidence type="ECO:0000305" key="1"/>
<comment type="similarity">
    <text evidence="1">Belongs to the UPF0174 family.</text>
</comment>
<protein>
    <recommendedName>
        <fullName>UPF0174 protein jhp_1494</fullName>
    </recommendedName>
</protein>
<reference key="1">
    <citation type="journal article" date="1999" name="Nature">
        <title>Genomic sequence comparison of two unrelated isolates of the human gastric pathogen Helicobacter pylori.</title>
        <authorList>
            <person name="Alm R.A."/>
            <person name="Ling L.-S.L."/>
            <person name="Moir D.T."/>
            <person name="King B.L."/>
            <person name="Brown E.D."/>
            <person name="Doig P.C."/>
            <person name="Smith D.R."/>
            <person name="Noonan B."/>
            <person name="Guild B.C."/>
            <person name="deJonge B.L."/>
            <person name="Carmel G."/>
            <person name="Tummino P.J."/>
            <person name="Caruso A."/>
            <person name="Uria-Nickelsen M."/>
            <person name="Mills D.M."/>
            <person name="Ives C."/>
            <person name="Gibson R."/>
            <person name="Merberg D."/>
            <person name="Mills S.D."/>
            <person name="Jiang Q."/>
            <person name="Taylor D.E."/>
            <person name="Vovis G.F."/>
            <person name="Trust T.J."/>
        </authorList>
    </citation>
    <scope>NUCLEOTIDE SEQUENCE [LARGE SCALE GENOMIC DNA]</scope>
    <source>
        <strain>J99 / ATCC 700824</strain>
    </source>
</reference>
<organism>
    <name type="scientific">Helicobacter pylori (strain J99 / ATCC 700824)</name>
    <name type="common">Campylobacter pylori J99</name>
    <dbReference type="NCBI Taxonomy" id="85963"/>
    <lineage>
        <taxon>Bacteria</taxon>
        <taxon>Pseudomonadati</taxon>
        <taxon>Campylobacterota</taxon>
        <taxon>Epsilonproteobacteria</taxon>
        <taxon>Campylobacterales</taxon>
        <taxon>Helicobacteraceae</taxon>
        <taxon>Helicobacter</taxon>
    </lineage>
</organism>
<dbReference type="EMBL" id="AE001439">
    <property type="protein sequence ID" value="AAD07073.1"/>
    <property type="molecule type" value="Genomic_DNA"/>
</dbReference>
<dbReference type="PIR" id="B71800">
    <property type="entry name" value="B71800"/>
</dbReference>
<dbReference type="RefSeq" id="WP_000323694.1">
    <property type="nucleotide sequence ID" value="NZ_CP011330.1"/>
</dbReference>
<dbReference type="SMR" id="Q9ZJ24"/>
<dbReference type="KEGG" id="hpj:jhp_1494"/>
<dbReference type="PATRIC" id="fig|85963.30.peg.1047"/>
<dbReference type="eggNOG" id="COG4735">
    <property type="taxonomic scope" value="Bacteria"/>
</dbReference>
<dbReference type="Proteomes" id="UP000000804">
    <property type="component" value="Chromosome"/>
</dbReference>
<dbReference type="InterPro" id="IPR025217">
    <property type="entry name" value="DUF3944"/>
</dbReference>
<dbReference type="InterPro" id="IPR021150">
    <property type="entry name" value="Ubiq_cyt_c_chap"/>
</dbReference>
<dbReference type="Pfam" id="PF13099">
    <property type="entry name" value="DUF3944"/>
    <property type="match status" value="1"/>
</dbReference>
<dbReference type="Pfam" id="PF03981">
    <property type="entry name" value="Ubiq_cyt_C_chap"/>
    <property type="match status" value="1"/>
</dbReference>
<gene>
    <name type="ordered locus">jhp_1494</name>
</gene>
<name>YF88_HELPJ</name>
<feature type="chain" id="PRO_0000216424" description="UPF0174 protein jhp_1494">
    <location>
        <begin position="1"/>
        <end position="253"/>
    </location>
</feature>
<sequence length="253" mass="28476">MAYKYDRDLEFLKQLESSDLLDLFEVLVFGKDGEKRHNEKLTSSIEYKRHGDDYAKYAERIAEELQYYGSNSFASFIKGEGVLYKEILCDVCDKLKVNYNKKTETTLIEQNMLSKILERSLEEMDDEEVKEMCDELSIKNTDNLNRQALSAATLTLFKMGGFKSYQLAVIVANAVAKTILGRGLSLAGNQVLTRTLSFLTGPVGWIITGVWTAIDIAGPAYRVTIPACIVVATLRLKTQQANEDKKSLQIESV</sequence>
<accession>Q9ZJ24</accession>
<proteinExistence type="inferred from homology"/>